<accession>B7L441</accession>
<organism>
    <name type="scientific">Escherichia coli (strain 55989 / EAEC)</name>
    <dbReference type="NCBI Taxonomy" id="585055"/>
    <lineage>
        <taxon>Bacteria</taxon>
        <taxon>Pseudomonadati</taxon>
        <taxon>Pseudomonadota</taxon>
        <taxon>Gammaproteobacteria</taxon>
        <taxon>Enterobacterales</taxon>
        <taxon>Enterobacteriaceae</taxon>
        <taxon>Escherichia</taxon>
    </lineage>
</organism>
<reference key="1">
    <citation type="journal article" date="2009" name="PLoS Genet.">
        <title>Organised genome dynamics in the Escherichia coli species results in highly diverse adaptive paths.</title>
        <authorList>
            <person name="Touchon M."/>
            <person name="Hoede C."/>
            <person name="Tenaillon O."/>
            <person name="Barbe V."/>
            <person name="Baeriswyl S."/>
            <person name="Bidet P."/>
            <person name="Bingen E."/>
            <person name="Bonacorsi S."/>
            <person name="Bouchier C."/>
            <person name="Bouvet O."/>
            <person name="Calteau A."/>
            <person name="Chiapello H."/>
            <person name="Clermont O."/>
            <person name="Cruveiller S."/>
            <person name="Danchin A."/>
            <person name="Diard M."/>
            <person name="Dossat C."/>
            <person name="Karoui M.E."/>
            <person name="Frapy E."/>
            <person name="Garry L."/>
            <person name="Ghigo J.M."/>
            <person name="Gilles A.M."/>
            <person name="Johnson J."/>
            <person name="Le Bouguenec C."/>
            <person name="Lescat M."/>
            <person name="Mangenot S."/>
            <person name="Martinez-Jehanne V."/>
            <person name="Matic I."/>
            <person name="Nassif X."/>
            <person name="Oztas S."/>
            <person name="Petit M.A."/>
            <person name="Pichon C."/>
            <person name="Rouy Z."/>
            <person name="Ruf C.S."/>
            <person name="Schneider D."/>
            <person name="Tourret J."/>
            <person name="Vacherie B."/>
            <person name="Vallenet D."/>
            <person name="Medigue C."/>
            <person name="Rocha E.P.C."/>
            <person name="Denamur E."/>
        </authorList>
    </citation>
    <scope>NUCLEOTIDE SEQUENCE [LARGE SCALE GENOMIC DNA]</scope>
    <source>
        <strain>55989 / EAEC</strain>
    </source>
</reference>
<dbReference type="EC" id="1.2.1.8" evidence="1"/>
<dbReference type="EMBL" id="CU928145">
    <property type="protein sequence ID" value="CAU96191.1"/>
    <property type="molecule type" value="Genomic_DNA"/>
</dbReference>
<dbReference type="RefSeq" id="WP_000089077.1">
    <property type="nucleotide sequence ID" value="NC_011748.1"/>
</dbReference>
<dbReference type="SMR" id="B7L441"/>
<dbReference type="KEGG" id="eck:EC55989_0314"/>
<dbReference type="HOGENOM" id="CLU_005391_0_0_6"/>
<dbReference type="UniPathway" id="UPA00529">
    <property type="reaction ID" value="UER00386"/>
</dbReference>
<dbReference type="Proteomes" id="UP000000746">
    <property type="component" value="Chromosome"/>
</dbReference>
<dbReference type="GO" id="GO:0008802">
    <property type="term" value="F:betaine-aldehyde dehydrogenase (NAD+) activity"/>
    <property type="evidence" value="ECO:0007669"/>
    <property type="project" value="UniProtKB-UniRule"/>
</dbReference>
<dbReference type="GO" id="GO:0046872">
    <property type="term" value="F:metal ion binding"/>
    <property type="evidence" value="ECO:0007669"/>
    <property type="project" value="UniProtKB-KW"/>
</dbReference>
<dbReference type="GO" id="GO:0019285">
    <property type="term" value="P:glycine betaine biosynthetic process from choline"/>
    <property type="evidence" value="ECO:0007669"/>
    <property type="project" value="UniProtKB-UniRule"/>
</dbReference>
<dbReference type="CDD" id="cd07090">
    <property type="entry name" value="ALDH_F9_TMBADH"/>
    <property type="match status" value="1"/>
</dbReference>
<dbReference type="FunFam" id="3.40.309.10:FF:000014">
    <property type="entry name" value="NAD/NADP-dependent betaine aldehyde dehydrogenase"/>
    <property type="match status" value="1"/>
</dbReference>
<dbReference type="FunFam" id="3.40.605.10:FF:000007">
    <property type="entry name" value="NAD/NADP-dependent betaine aldehyde dehydrogenase"/>
    <property type="match status" value="1"/>
</dbReference>
<dbReference type="Gene3D" id="3.40.605.10">
    <property type="entry name" value="Aldehyde Dehydrogenase, Chain A, domain 1"/>
    <property type="match status" value="1"/>
</dbReference>
<dbReference type="Gene3D" id="3.40.309.10">
    <property type="entry name" value="Aldehyde Dehydrogenase, Chain A, domain 2"/>
    <property type="match status" value="1"/>
</dbReference>
<dbReference type="HAMAP" id="MF_00804">
    <property type="entry name" value="BADH"/>
    <property type="match status" value="1"/>
</dbReference>
<dbReference type="InterPro" id="IPR016161">
    <property type="entry name" value="Ald_DH/histidinol_DH"/>
</dbReference>
<dbReference type="InterPro" id="IPR016163">
    <property type="entry name" value="Ald_DH_C"/>
</dbReference>
<dbReference type="InterPro" id="IPR016160">
    <property type="entry name" value="Ald_DH_CS_CYS"/>
</dbReference>
<dbReference type="InterPro" id="IPR029510">
    <property type="entry name" value="Ald_DH_CS_GLU"/>
</dbReference>
<dbReference type="InterPro" id="IPR016162">
    <property type="entry name" value="Ald_DH_N"/>
</dbReference>
<dbReference type="InterPro" id="IPR015590">
    <property type="entry name" value="Aldehyde_DH_dom"/>
</dbReference>
<dbReference type="InterPro" id="IPR011264">
    <property type="entry name" value="BADH"/>
</dbReference>
<dbReference type="NCBIfam" id="TIGR01804">
    <property type="entry name" value="BADH"/>
    <property type="match status" value="1"/>
</dbReference>
<dbReference type="NCBIfam" id="NF009725">
    <property type="entry name" value="PRK13252.1"/>
    <property type="match status" value="1"/>
</dbReference>
<dbReference type="PANTHER" id="PTHR11699">
    <property type="entry name" value="ALDEHYDE DEHYDROGENASE-RELATED"/>
    <property type="match status" value="1"/>
</dbReference>
<dbReference type="Pfam" id="PF00171">
    <property type="entry name" value="Aldedh"/>
    <property type="match status" value="1"/>
</dbReference>
<dbReference type="SUPFAM" id="SSF53720">
    <property type="entry name" value="ALDH-like"/>
    <property type="match status" value="1"/>
</dbReference>
<dbReference type="PROSITE" id="PS00070">
    <property type="entry name" value="ALDEHYDE_DEHYDR_CYS"/>
    <property type="match status" value="1"/>
</dbReference>
<dbReference type="PROSITE" id="PS00687">
    <property type="entry name" value="ALDEHYDE_DEHYDR_GLU"/>
    <property type="match status" value="1"/>
</dbReference>
<proteinExistence type="inferred from homology"/>
<evidence type="ECO:0000255" key="1">
    <source>
        <dbReference type="HAMAP-Rule" id="MF_00804"/>
    </source>
</evidence>
<feature type="chain" id="PRO_1000148556" description="Betaine aldehyde dehydrogenase">
    <location>
        <begin position="1"/>
        <end position="490"/>
    </location>
</feature>
<feature type="active site" description="Charge relay system" evidence="1">
    <location>
        <position position="162"/>
    </location>
</feature>
<feature type="active site" description="Proton acceptor" evidence="1">
    <location>
        <position position="252"/>
    </location>
</feature>
<feature type="active site" description="Nucleophile" evidence="1">
    <location>
        <position position="286"/>
    </location>
</feature>
<feature type="active site" description="Charge relay system" evidence="1">
    <location>
        <position position="464"/>
    </location>
</feature>
<feature type="binding site" evidence="1">
    <location>
        <position position="26"/>
    </location>
    <ligand>
        <name>K(+)</name>
        <dbReference type="ChEBI" id="CHEBI:29103"/>
        <label>1</label>
    </ligand>
</feature>
<feature type="binding site" evidence="1">
    <location>
        <position position="27"/>
    </location>
    <ligand>
        <name>K(+)</name>
        <dbReference type="ChEBI" id="CHEBI:29103"/>
        <label>1</label>
    </ligand>
</feature>
<feature type="binding site" evidence="1">
    <location>
        <position position="93"/>
    </location>
    <ligand>
        <name>K(+)</name>
        <dbReference type="ChEBI" id="CHEBI:29103"/>
        <label>1</label>
    </ligand>
</feature>
<feature type="binding site" evidence="1">
    <location>
        <begin position="150"/>
        <end position="152"/>
    </location>
    <ligand>
        <name>NAD(+)</name>
        <dbReference type="ChEBI" id="CHEBI:57540"/>
    </ligand>
</feature>
<feature type="binding site" evidence="1">
    <location>
        <begin position="176"/>
        <end position="179"/>
    </location>
    <ligand>
        <name>NAD(+)</name>
        <dbReference type="ChEBI" id="CHEBI:57540"/>
    </ligand>
</feature>
<feature type="binding site" evidence="1">
    <location>
        <position position="180"/>
    </location>
    <ligand>
        <name>K(+)</name>
        <dbReference type="ChEBI" id="CHEBI:29103"/>
        <label>1</label>
    </ligand>
</feature>
<feature type="binding site" evidence="1">
    <location>
        <begin position="230"/>
        <end position="233"/>
    </location>
    <ligand>
        <name>NAD(+)</name>
        <dbReference type="ChEBI" id="CHEBI:57540"/>
    </ligand>
</feature>
<feature type="binding site" evidence="1">
    <location>
        <position position="246"/>
    </location>
    <ligand>
        <name>K(+)</name>
        <dbReference type="ChEBI" id="CHEBI:29103"/>
        <label>2</label>
    </ligand>
</feature>
<feature type="binding site" evidence="1">
    <location>
        <position position="254"/>
    </location>
    <ligand>
        <name>NAD(+)</name>
        <dbReference type="ChEBI" id="CHEBI:57540"/>
    </ligand>
</feature>
<feature type="binding site" description="covalent" evidence="1">
    <location>
        <position position="286"/>
    </location>
    <ligand>
        <name>NAD(+)</name>
        <dbReference type="ChEBI" id="CHEBI:57540"/>
    </ligand>
</feature>
<feature type="binding site" evidence="1">
    <location>
        <position position="387"/>
    </location>
    <ligand>
        <name>NAD(+)</name>
        <dbReference type="ChEBI" id="CHEBI:57540"/>
    </ligand>
</feature>
<feature type="binding site" evidence="1">
    <location>
        <position position="457"/>
    </location>
    <ligand>
        <name>K(+)</name>
        <dbReference type="ChEBI" id="CHEBI:29103"/>
        <label>2</label>
    </ligand>
</feature>
<feature type="binding site" evidence="1">
    <location>
        <position position="460"/>
    </location>
    <ligand>
        <name>K(+)</name>
        <dbReference type="ChEBI" id="CHEBI:29103"/>
        <label>2</label>
    </ligand>
</feature>
<feature type="site" description="Seems to be a necessary countercharge to the potassium cations" evidence="1">
    <location>
        <position position="248"/>
    </location>
</feature>
<feature type="modified residue" description="Cysteine sulfenic acid (-SOH)" evidence="1">
    <location>
        <position position="286"/>
    </location>
</feature>
<sequence length="490" mass="52895">MSRMAEQQLYIHGGYTSATSGRTFETINPANGNVLATVQAAGREDVDRAVKSAQQGQKIWAAMTAMERSRILRRAVDILRERNDELAKLETLDTGKAYSETSTVDIVTGADVLEYYAGLIPALEGSQIPLRETSFVYTRREPLGVVAGIGAWNYPIQIALWKSAPALAAGNAMIFKPSEVTPLTALKLAEIYSEAGLPDGVFNVLPGVGAETGQYLTEHPGIAKVSFTGGVASGKKVMANSAASSLKEVTMELGGKSPLIVFDDADLDLAADIAMMANFFSSGQVCTNGTRVFVPAKCKAAFEQKILARVERIRAGDVFDPQTNFGPLVSFPHRDNVLRYIAKGKEEGARVLCGGDVLKGDGFDNGAWVAPTVFTDCSDDMTIVREEIFGPVMSLLTYESEDEVIRRANDTDYGLAAGIVTADLNRAHRVIHQLEAGICWINTWGESPAEMPVGGYKHSGIGRENGVMTLQSYTQVKSIQVEMAKFQSIF</sequence>
<keyword id="KW-0479">Metal-binding</keyword>
<keyword id="KW-0520">NAD</keyword>
<keyword id="KW-0521">NADP</keyword>
<keyword id="KW-0558">Oxidation</keyword>
<keyword id="KW-0560">Oxidoreductase</keyword>
<keyword id="KW-0630">Potassium</keyword>
<keyword id="KW-1185">Reference proteome</keyword>
<protein>
    <recommendedName>
        <fullName evidence="1">Betaine aldehyde dehydrogenase</fullName>
        <shortName evidence="1">BADH</shortName>
        <ecNumber evidence="1">1.2.1.8</ecNumber>
    </recommendedName>
</protein>
<name>BETB_ECO55</name>
<comment type="function">
    <text evidence="1">Involved in the biosynthesis of the osmoprotectant glycine betaine. Catalyzes the irreversible oxidation of betaine aldehyde to the corresponding acid.</text>
</comment>
<comment type="catalytic activity">
    <reaction evidence="1">
        <text>betaine aldehyde + NAD(+) + H2O = glycine betaine + NADH + 2 H(+)</text>
        <dbReference type="Rhea" id="RHEA:15305"/>
        <dbReference type="ChEBI" id="CHEBI:15377"/>
        <dbReference type="ChEBI" id="CHEBI:15378"/>
        <dbReference type="ChEBI" id="CHEBI:15710"/>
        <dbReference type="ChEBI" id="CHEBI:17750"/>
        <dbReference type="ChEBI" id="CHEBI:57540"/>
        <dbReference type="ChEBI" id="CHEBI:57945"/>
        <dbReference type="EC" id="1.2.1.8"/>
    </reaction>
    <physiologicalReaction direction="left-to-right" evidence="1">
        <dbReference type="Rhea" id="RHEA:15306"/>
    </physiologicalReaction>
</comment>
<comment type="cofactor">
    <cofactor evidence="1">
        <name>K(+)</name>
        <dbReference type="ChEBI" id="CHEBI:29103"/>
    </cofactor>
    <text evidence="1">Binds 2 potassium ions per subunit.</text>
</comment>
<comment type="pathway">
    <text evidence="1">Amine and polyamine biosynthesis; betaine biosynthesis via choline pathway; betaine from betaine aldehyde: step 1/1.</text>
</comment>
<comment type="subunit">
    <text evidence="1">Dimer of dimers.</text>
</comment>
<comment type="similarity">
    <text evidence="1">Belongs to the aldehyde dehydrogenase family.</text>
</comment>
<gene>
    <name evidence="1" type="primary">betB</name>
    <name type="ordered locus">EC55989_0314</name>
</gene>